<dbReference type="EC" id="5.3.1.6"/>
<dbReference type="EMBL" id="AE016816">
    <property type="protein sequence ID" value="AAS51151.1"/>
    <property type="molecule type" value="Genomic_DNA"/>
</dbReference>
<dbReference type="RefSeq" id="NP_983327.1">
    <property type="nucleotide sequence ID" value="NM_208680.2"/>
</dbReference>
<dbReference type="SMR" id="Q75CJ6"/>
<dbReference type="FunCoup" id="Q75CJ6">
    <property type="interactions" value="945"/>
</dbReference>
<dbReference type="STRING" id="284811.Q75CJ6"/>
<dbReference type="EnsemblFungi" id="AAS51151">
    <property type="protein sequence ID" value="AAS51151"/>
    <property type="gene ID" value="AGOS_ACL077C"/>
</dbReference>
<dbReference type="GeneID" id="4619447"/>
<dbReference type="KEGG" id="ago:AGOS_ACL077C"/>
<dbReference type="eggNOG" id="KOG3075">
    <property type="taxonomic scope" value="Eukaryota"/>
</dbReference>
<dbReference type="HOGENOM" id="CLU_056590_0_0_1"/>
<dbReference type="InParanoid" id="Q75CJ6"/>
<dbReference type="OMA" id="ACHVQEK"/>
<dbReference type="OrthoDB" id="1555531at2759"/>
<dbReference type="UniPathway" id="UPA00115">
    <property type="reaction ID" value="UER00412"/>
</dbReference>
<dbReference type="Proteomes" id="UP000000591">
    <property type="component" value="Chromosome III"/>
</dbReference>
<dbReference type="GO" id="GO:0005737">
    <property type="term" value="C:cytoplasm"/>
    <property type="evidence" value="ECO:0000318"/>
    <property type="project" value="GO_Central"/>
</dbReference>
<dbReference type="GO" id="GO:0004751">
    <property type="term" value="F:ribose-5-phosphate isomerase activity"/>
    <property type="evidence" value="ECO:0000318"/>
    <property type="project" value="GO_Central"/>
</dbReference>
<dbReference type="GO" id="GO:0006014">
    <property type="term" value="P:D-ribose metabolic process"/>
    <property type="evidence" value="ECO:0000318"/>
    <property type="project" value="GO_Central"/>
</dbReference>
<dbReference type="GO" id="GO:0009052">
    <property type="term" value="P:pentose-phosphate shunt, non-oxidative branch"/>
    <property type="evidence" value="ECO:0000318"/>
    <property type="project" value="GO_Central"/>
</dbReference>
<dbReference type="GO" id="GO:0008615">
    <property type="term" value="P:pyridoxine biosynthetic process"/>
    <property type="evidence" value="ECO:0007669"/>
    <property type="project" value="EnsemblFungi"/>
</dbReference>
<dbReference type="CDD" id="cd01398">
    <property type="entry name" value="RPI_A"/>
    <property type="match status" value="1"/>
</dbReference>
<dbReference type="FunFam" id="3.40.50.1360:FF:000014">
    <property type="entry name" value="Ribose 5-phosphate isomerase"/>
    <property type="match status" value="1"/>
</dbReference>
<dbReference type="Gene3D" id="3.30.70.260">
    <property type="match status" value="1"/>
</dbReference>
<dbReference type="Gene3D" id="3.40.50.1360">
    <property type="match status" value="1"/>
</dbReference>
<dbReference type="InterPro" id="IPR037171">
    <property type="entry name" value="NagB/RpiA_transferase-like"/>
</dbReference>
<dbReference type="InterPro" id="IPR004788">
    <property type="entry name" value="Ribose5P_isomerase_type_A"/>
</dbReference>
<dbReference type="NCBIfam" id="TIGR00021">
    <property type="entry name" value="rpiA"/>
    <property type="match status" value="1"/>
</dbReference>
<dbReference type="PANTHER" id="PTHR11934">
    <property type="entry name" value="RIBOSE-5-PHOSPHATE ISOMERASE"/>
    <property type="match status" value="1"/>
</dbReference>
<dbReference type="PANTHER" id="PTHR11934:SF0">
    <property type="entry name" value="RIBOSE-5-PHOSPHATE ISOMERASE"/>
    <property type="match status" value="1"/>
</dbReference>
<dbReference type="Pfam" id="PF06026">
    <property type="entry name" value="Rib_5-P_isom_A"/>
    <property type="match status" value="1"/>
</dbReference>
<dbReference type="SUPFAM" id="SSF75445">
    <property type="entry name" value="D-ribose-5-phosphate isomerase (RpiA), lid domain"/>
    <property type="match status" value="1"/>
</dbReference>
<dbReference type="SUPFAM" id="SSF100950">
    <property type="entry name" value="NagB/RpiA/CoA transferase-like"/>
    <property type="match status" value="1"/>
</dbReference>
<feature type="chain" id="PRO_0000339883" description="Ribose-5-phosphate isomerase">
    <location>
        <begin position="1"/>
        <end position="255"/>
    </location>
</feature>
<evidence type="ECO:0000305" key="1"/>
<accession>Q75CJ6</accession>
<proteinExistence type="inferred from homology"/>
<name>RPIA_EREGS</name>
<protein>
    <recommendedName>
        <fullName>Ribose-5-phosphate isomerase</fullName>
        <ecNumber>5.3.1.6</ecNumber>
    </recommendedName>
    <alternativeName>
        <fullName>D-ribose-5-phosphate ketol-isomerase</fullName>
    </alternativeName>
    <alternativeName>
        <fullName>Phosphoriboisomerase</fullName>
    </alternativeName>
</protein>
<reference key="1">
    <citation type="journal article" date="2004" name="Science">
        <title>The Ashbya gossypii genome as a tool for mapping the ancient Saccharomyces cerevisiae genome.</title>
        <authorList>
            <person name="Dietrich F.S."/>
            <person name="Voegeli S."/>
            <person name="Brachat S."/>
            <person name="Lerch A."/>
            <person name="Gates K."/>
            <person name="Steiner S."/>
            <person name="Mohr C."/>
            <person name="Poehlmann R."/>
            <person name="Luedi P."/>
            <person name="Choi S."/>
            <person name="Wing R.A."/>
            <person name="Flavier A."/>
            <person name="Gaffney T.D."/>
            <person name="Philippsen P."/>
        </authorList>
    </citation>
    <scope>NUCLEOTIDE SEQUENCE [LARGE SCALE GENOMIC DNA]</scope>
    <source>
        <strain>ATCC 10895 / CBS 109.51 / FGSC 9923 / NRRL Y-1056</strain>
    </source>
</reference>
<reference key="2">
    <citation type="journal article" date="2013" name="G3 (Bethesda)">
        <title>Genomes of Ashbya fungi isolated from insects reveal four mating-type loci, numerous translocations, lack of transposons, and distinct gene duplications.</title>
        <authorList>
            <person name="Dietrich F.S."/>
            <person name="Voegeli S."/>
            <person name="Kuo S."/>
            <person name="Philippsen P."/>
        </authorList>
    </citation>
    <scope>GENOME REANNOTATION</scope>
    <source>
        <strain>ATCC 10895 / CBS 109.51 / FGSC 9923 / NRRL Y-1056</strain>
    </source>
</reference>
<sequence>MSVTPIEELPSLGDALEDAKRAASYRAVDENLDPAKHRVVGIGSGSTVVYVAERIGKYQASPELKAKVEFICIPTGFQSRQLILDNGLRLGSIEQYPEVDIAFDGADEVDPELNLIKGGGACLFQEKLVSTSSAQFIVVADSRKRSPQRLGTSWTRGVPVEVVPSAYVRVLRDLHGIPGCRSAQLRLGEPGKAGPVVTDNNNLLIDADFGPLEDPAALHARIKALVGVVETGIFAGNAAKAYFGSADGSTQTLAR</sequence>
<gene>
    <name type="primary">RKI1</name>
    <name type="ordered locus">ACL077C</name>
</gene>
<organism>
    <name type="scientific">Eremothecium gossypii (strain ATCC 10895 / CBS 109.51 / FGSC 9923 / NRRL Y-1056)</name>
    <name type="common">Yeast</name>
    <name type="synonym">Ashbya gossypii</name>
    <dbReference type="NCBI Taxonomy" id="284811"/>
    <lineage>
        <taxon>Eukaryota</taxon>
        <taxon>Fungi</taxon>
        <taxon>Dikarya</taxon>
        <taxon>Ascomycota</taxon>
        <taxon>Saccharomycotina</taxon>
        <taxon>Saccharomycetes</taxon>
        <taxon>Saccharomycetales</taxon>
        <taxon>Saccharomycetaceae</taxon>
        <taxon>Eremothecium</taxon>
    </lineage>
</organism>
<keyword id="KW-0963">Cytoplasm</keyword>
<keyword id="KW-0413">Isomerase</keyword>
<keyword id="KW-1185">Reference proteome</keyword>
<comment type="catalytic activity">
    <reaction>
        <text>aldehydo-D-ribose 5-phosphate = D-ribulose 5-phosphate</text>
        <dbReference type="Rhea" id="RHEA:14657"/>
        <dbReference type="ChEBI" id="CHEBI:58121"/>
        <dbReference type="ChEBI" id="CHEBI:58273"/>
        <dbReference type="EC" id="5.3.1.6"/>
    </reaction>
</comment>
<comment type="pathway">
    <text>Carbohydrate degradation; pentose phosphate pathway; D-ribose 5-phosphate from D-ribulose 5-phosphate (non-oxidative stage): step 1/1.</text>
</comment>
<comment type="subcellular location">
    <subcellularLocation>
        <location evidence="1">Cytoplasm</location>
    </subcellularLocation>
</comment>
<comment type="similarity">
    <text evidence="1">Belongs to the ribose 5-phosphate isomerase family.</text>
</comment>